<name>AROQ_MYCA1</name>
<organism>
    <name type="scientific">Mycobacterium avium (strain 104)</name>
    <dbReference type="NCBI Taxonomy" id="243243"/>
    <lineage>
        <taxon>Bacteria</taxon>
        <taxon>Bacillati</taxon>
        <taxon>Actinomycetota</taxon>
        <taxon>Actinomycetes</taxon>
        <taxon>Mycobacteriales</taxon>
        <taxon>Mycobacteriaceae</taxon>
        <taxon>Mycobacterium</taxon>
        <taxon>Mycobacterium avium complex (MAC)</taxon>
    </lineage>
</organism>
<feature type="chain" id="PRO_1000023486" description="3-dehydroquinate dehydratase">
    <location>
        <begin position="1"/>
        <end position="143"/>
    </location>
</feature>
<feature type="active site" description="Proton acceptor" evidence="1">
    <location>
        <position position="22"/>
    </location>
</feature>
<feature type="active site" description="Proton donor" evidence="1">
    <location>
        <position position="99"/>
    </location>
</feature>
<feature type="binding site" evidence="1">
    <location>
        <position position="73"/>
    </location>
    <ligand>
        <name>substrate</name>
    </ligand>
</feature>
<feature type="binding site" evidence="1">
    <location>
        <position position="79"/>
    </location>
    <ligand>
        <name>substrate</name>
    </ligand>
</feature>
<feature type="binding site" evidence="1">
    <location>
        <position position="86"/>
    </location>
    <ligand>
        <name>substrate</name>
    </ligand>
</feature>
<feature type="binding site" evidence="1">
    <location>
        <begin position="100"/>
        <end position="101"/>
    </location>
    <ligand>
        <name>substrate</name>
    </ligand>
</feature>
<feature type="binding site" evidence="1">
    <location>
        <position position="110"/>
    </location>
    <ligand>
        <name>substrate</name>
    </ligand>
</feature>
<feature type="site" description="Transition state stabilizer" evidence="1">
    <location>
        <position position="17"/>
    </location>
</feature>
<comment type="function">
    <text evidence="1">Catalyzes a trans-dehydration via an enolate intermediate.</text>
</comment>
<comment type="catalytic activity">
    <reaction evidence="1">
        <text>3-dehydroquinate = 3-dehydroshikimate + H2O</text>
        <dbReference type="Rhea" id="RHEA:21096"/>
        <dbReference type="ChEBI" id="CHEBI:15377"/>
        <dbReference type="ChEBI" id="CHEBI:16630"/>
        <dbReference type="ChEBI" id="CHEBI:32364"/>
        <dbReference type="EC" id="4.2.1.10"/>
    </reaction>
</comment>
<comment type="pathway">
    <text evidence="1">Metabolic intermediate biosynthesis; chorismate biosynthesis; chorismate from D-erythrose 4-phosphate and phosphoenolpyruvate: step 3/7.</text>
</comment>
<comment type="subunit">
    <text evidence="1">Homododecamer.</text>
</comment>
<comment type="similarity">
    <text evidence="1">Belongs to the type-II 3-dehydroquinase family.</text>
</comment>
<dbReference type="EC" id="4.2.1.10" evidence="1"/>
<dbReference type="EMBL" id="CP000479">
    <property type="protein sequence ID" value="ABK65811.1"/>
    <property type="molecule type" value="Genomic_DNA"/>
</dbReference>
<dbReference type="RefSeq" id="WP_003872630.1">
    <property type="nucleotide sequence ID" value="NC_008595.1"/>
</dbReference>
<dbReference type="SMR" id="A0QI58"/>
<dbReference type="KEGG" id="mav:MAV_3413"/>
<dbReference type="HOGENOM" id="CLU_090968_1_0_11"/>
<dbReference type="UniPathway" id="UPA00053">
    <property type="reaction ID" value="UER00086"/>
</dbReference>
<dbReference type="Proteomes" id="UP000001574">
    <property type="component" value="Chromosome"/>
</dbReference>
<dbReference type="GO" id="GO:0003855">
    <property type="term" value="F:3-dehydroquinate dehydratase activity"/>
    <property type="evidence" value="ECO:0007669"/>
    <property type="project" value="UniProtKB-UniRule"/>
</dbReference>
<dbReference type="GO" id="GO:0008652">
    <property type="term" value="P:amino acid biosynthetic process"/>
    <property type="evidence" value="ECO:0007669"/>
    <property type="project" value="UniProtKB-KW"/>
</dbReference>
<dbReference type="GO" id="GO:0009073">
    <property type="term" value="P:aromatic amino acid family biosynthetic process"/>
    <property type="evidence" value="ECO:0007669"/>
    <property type="project" value="UniProtKB-KW"/>
</dbReference>
<dbReference type="GO" id="GO:0009423">
    <property type="term" value="P:chorismate biosynthetic process"/>
    <property type="evidence" value="ECO:0007669"/>
    <property type="project" value="UniProtKB-UniRule"/>
</dbReference>
<dbReference type="GO" id="GO:0019631">
    <property type="term" value="P:quinate catabolic process"/>
    <property type="evidence" value="ECO:0007669"/>
    <property type="project" value="TreeGrafter"/>
</dbReference>
<dbReference type="CDD" id="cd00466">
    <property type="entry name" value="DHQase_II"/>
    <property type="match status" value="1"/>
</dbReference>
<dbReference type="FunFam" id="3.40.50.9100:FF:000001">
    <property type="entry name" value="3-dehydroquinate dehydratase"/>
    <property type="match status" value="1"/>
</dbReference>
<dbReference type="Gene3D" id="3.40.50.9100">
    <property type="entry name" value="Dehydroquinase, class II"/>
    <property type="match status" value="1"/>
</dbReference>
<dbReference type="HAMAP" id="MF_00169">
    <property type="entry name" value="AroQ"/>
    <property type="match status" value="1"/>
</dbReference>
<dbReference type="InterPro" id="IPR001874">
    <property type="entry name" value="DHquinase_II"/>
</dbReference>
<dbReference type="InterPro" id="IPR018509">
    <property type="entry name" value="DHquinase_II_CS"/>
</dbReference>
<dbReference type="InterPro" id="IPR036441">
    <property type="entry name" value="DHquinase_II_sf"/>
</dbReference>
<dbReference type="NCBIfam" id="TIGR01088">
    <property type="entry name" value="aroQ"/>
    <property type="match status" value="1"/>
</dbReference>
<dbReference type="NCBIfam" id="NF003805">
    <property type="entry name" value="PRK05395.1-2"/>
    <property type="match status" value="1"/>
</dbReference>
<dbReference type="NCBIfam" id="NF003806">
    <property type="entry name" value="PRK05395.1-3"/>
    <property type="match status" value="1"/>
</dbReference>
<dbReference type="NCBIfam" id="NF003807">
    <property type="entry name" value="PRK05395.1-4"/>
    <property type="match status" value="1"/>
</dbReference>
<dbReference type="PANTHER" id="PTHR21272">
    <property type="entry name" value="CATABOLIC 3-DEHYDROQUINASE"/>
    <property type="match status" value="1"/>
</dbReference>
<dbReference type="PANTHER" id="PTHR21272:SF3">
    <property type="entry name" value="CATABOLIC 3-DEHYDROQUINASE"/>
    <property type="match status" value="1"/>
</dbReference>
<dbReference type="Pfam" id="PF01220">
    <property type="entry name" value="DHquinase_II"/>
    <property type="match status" value="1"/>
</dbReference>
<dbReference type="PIRSF" id="PIRSF001399">
    <property type="entry name" value="DHquinase_II"/>
    <property type="match status" value="1"/>
</dbReference>
<dbReference type="SUPFAM" id="SSF52304">
    <property type="entry name" value="Type II 3-dehydroquinate dehydratase"/>
    <property type="match status" value="1"/>
</dbReference>
<dbReference type="PROSITE" id="PS01029">
    <property type="entry name" value="DEHYDROQUINASE_II"/>
    <property type="match status" value="1"/>
</dbReference>
<accession>A0QI58</accession>
<proteinExistence type="inferred from homology"/>
<evidence type="ECO:0000255" key="1">
    <source>
        <dbReference type="HAMAP-Rule" id="MF_00169"/>
    </source>
</evidence>
<keyword id="KW-0028">Amino-acid biosynthesis</keyword>
<keyword id="KW-0057">Aromatic amino acid biosynthesis</keyword>
<keyword id="KW-0456">Lyase</keyword>
<sequence length="143" mass="15220">MIVQVINGPNLGRLGRREPDVYGDTTHDQLAALIEAEAAALGLKAIVRQSDSEAELLDWIHGAADANQPVILNAGGLTHTSVALRDACAELSAPLIEVHISNVHAREEFRRHSYLSPVATGVIVGLGVQGYLLALRYLAGRPA</sequence>
<protein>
    <recommendedName>
        <fullName evidence="1">3-dehydroquinate dehydratase</fullName>
        <shortName evidence="1">3-dehydroquinase</shortName>
        <ecNumber evidence="1">4.2.1.10</ecNumber>
    </recommendedName>
    <alternativeName>
        <fullName evidence="1">Type II DHQase</fullName>
    </alternativeName>
</protein>
<gene>
    <name evidence="1" type="primary">aroQ</name>
    <name type="ordered locus">MAV_3413</name>
</gene>
<reference key="1">
    <citation type="submission" date="2006-10" db="EMBL/GenBank/DDBJ databases">
        <authorList>
            <person name="Fleischmann R.D."/>
            <person name="Dodson R.J."/>
            <person name="Haft D.H."/>
            <person name="Merkel J.S."/>
            <person name="Nelson W.C."/>
            <person name="Fraser C.M."/>
        </authorList>
    </citation>
    <scope>NUCLEOTIDE SEQUENCE [LARGE SCALE GENOMIC DNA]</scope>
    <source>
        <strain>104</strain>
    </source>
</reference>